<evidence type="ECO:0000255" key="1">
    <source>
        <dbReference type="HAMAP-Rule" id="MF_01633"/>
    </source>
</evidence>
<sequence length="239" mass="27038">MTRAVCLLSGGLDSPTVLAYALSNGYEVFPLSFDYGQRHKKELESSKKICDYYHLNLKIIKIDLRAIGHSALTDNIDVPENDLKSIGNDIPVTYVPARNTIFLSIAAAYAETLNANEIFIGANAIDYSGYPDCRPEYFNKMEEALSLGTSIGLRNGIKINVPLQYLTKSDIVKLGRKLKVPYKLTWSCYNGRKKACGKCDSCLLRLKGFMEAGDFDDIEYEDYPEFYKTYLKNKHFDKF</sequence>
<reference key="1">
    <citation type="journal article" date="2004" name="Proc. Natl. Acad. Sci. U.S.A.">
        <title>Genome sequence of Picrophilus torridus and its implications for life around pH 0.</title>
        <authorList>
            <person name="Fuetterer O."/>
            <person name="Angelov A."/>
            <person name="Liesegang H."/>
            <person name="Gottschalk G."/>
            <person name="Schleper C."/>
            <person name="Schepers B."/>
            <person name="Dock C."/>
            <person name="Antranikian G."/>
            <person name="Liebl W."/>
        </authorList>
    </citation>
    <scope>NUCLEOTIDE SEQUENCE [LARGE SCALE GENOMIC DNA]</scope>
    <source>
        <strain>ATCC 700027 / DSM 9790 / JCM 10055 / NBRC 100828 / KAW 2/3</strain>
    </source>
</reference>
<accession>Q6KZF9</accession>
<proteinExistence type="inferred from homology"/>
<protein>
    <recommendedName>
        <fullName evidence="1">7-cyano-7-deazaguanine synthase</fullName>
        <ecNumber evidence="1">6.3.4.20</ecNumber>
    </recommendedName>
    <alternativeName>
        <fullName evidence="1">7-cyano-7-carbaguanine synthase</fullName>
    </alternativeName>
    <alternativeName>
        <fullName evidence="1">Archaeosine biosynthesis protein QueC</fullName>
    </alternativeName>
    <alternativeName>
        <fullName evidence="1">PreQ(0) synthase</fullName>
    </alternativeName>
</protein>
<name>QUEC_PICTO</name>
<keyword id="KW-0067">ATP-binding</keyword>
<keyword id="KW-0436">Ligase</keyword>
<keyword id="KW-0479">Metal-binding</keyword>
<keyword id="KW-0547">Nucleotide-binding</keyword>
<keyword id="KW-0862">Zinc</keyword>
<comment type="function">
    <text evidence="1">Catalyzes the ATP-dependent conversion of 7-carboxy-7-deazaguanine (CDG) to 7-cyano-7-deazaguanine (preQ(0)).</text>
</comment>
<comment type="catalytic activity">
    <reaction evidence="1">
        <text>7-carboxy-7-deazaguanine + NH4(+) + ATP = 7-cyano-7-deazaguanine + ADP + phosphate + H2O + H(+)</text>
        <dbReference type="Rhea" id="RHEA:27982"/>
        <dbReference type="ChEBI" id="CHEBI:15377"/>
        <dbReference type="ChEBI" id="CHEBI:15378"/>
        <dbReference type="ChEBI" id="CHEBI:28938"/>
        <dbReference type="ChEBI" id="CHEBI:30616"/>
        <dbReference type="ChEBI" id="CHEBI:43474"/>
        <dbReference type="ChEBI" id="CHEBI:45075"/>
        <dbReference type="ChEBI" id="CHEBI:61036"/>
        <dbReference type="ChEBI" id="CHEBI:456216"/>
        <dbReference type="EC" id="6.3.4.20"/>
    </reaction>
</comment>
<comment type="cofactor">
    <cofactor evidence="1">
        <name>Zn(2+)</name>
        <dbReference type="ChEBI" id="CHEBI:29105"/>
    </cofactor>
    <text evidence="1">Binds 1 zinc ion per subunit.</text>
</comment>
<comment type="pathway">
    <text evidence="1">Purine metabolism; 7-cyano-7-deazaguanine biosynthesis.</text>
</comment>
<comment type="similarity">
    <text evidence="1">Belongs to the QueC family.</text>
</comment>
<gene>
    <name evidence="1" type="primary">queC</name>
    <name type="ordered locus">PTO1308</name>
</gene>
<dbReference type="EC" id="6.3.4.20" evidence="1"/>
<dbReference type="EMBL" id="AE017261">
    <property type="protein sequence ID" value="AAT43893.1"/>
    <property type="molecule type" value="Genomic_DNA"/>
</dbReference>
<dbReference type="RefSeq" id="WP_011178109.1">
    <property type="nucleotide sequence ID" value="NC_005877.1"/>
</dbReference>
<dbReference type="SMR" id="Q6KZF9"/>
<dbReference type="FunCoup" id="Q6KZF9">
    <property type="interactions" value="1"/>
</dbReference>
<dbReference type="STRING" id="263820.PTO1308"/>
<dbReference type="PaxDb" id="263820-PTO1308"/>
<dbReference type="GeneID" id="2844293"/>
<dbReference type="KEGG" id="pto:PTO1308"/>
<dbReference type="PATRIC" id="fig|263820.9.peg.1360"/>
<dbReference type="eggNOG" id="arCOG00039">
    <property type="taxonomic scope" value="Archaea"/>
</dbReference>
<dbReference type="HOGENOM" id="CLU_081854_1_0_2"/>
<dbReference type="InParanoid" id="Q6KZF9"/>
<dbReference type="OrthoDB" id="6532at2157"/>
<dbReference type="UniPathway" id="UPA00391"/>
<dbReference type="Proteomes" id="UP000000438">
    <property type="component" value="Chromosome"/>
</dbReference>
<dbReference type="GO" id="GO:0005524">
    <property type="term" value="F:ATP binding"/>
    <property type="evidence" value="ECO:0007669"/>
    <property type="project" value="UniProtKB-UniRule"/>
</dbReference>
<dbReference type="GO" id="GO:0016879">
    <property type="term" value="F:ligase activity, forming carbon-nitrogen bonds"/>
    <property type="evidence" value="ECO:0007669"/>
    <property type="project" value="UniProtKB-UniRule"/>
</dbReference>
<dbReference type="GO" id="GO:0008270">
    <property type="term" value="F:zinc ion binding"/>
    <property type="evidence" value="ECO:0007669"/>
    <property type="project" value="UniProtKB-UniRule"/>
</dbReference>
<dbReference type="CDD" id="cd01995">
    <property type="entry name" value="QueC-like"/>
    <property type="match status" value="1"/>
</dbReference>
<dbReference type="Gene3D" id="3.40.50.620">
    <property type="entry name" value="HUPs"/>
    <property type="match status" value="1"/>
</dbReference>
<dbReference type="HAMAP" id="MF_01633">
    <property type="entry name" value="QueC"/>
    <property type="match status" value="1"/>
</dbReference>
<dbReference type="InterPro" id="IPR018317">
    <property type="entry name" value="QueC"/>
</dbReference>
<dbReference type="InterPro" id="IPR014729">
    <property type="entry name" value="Rossmann-like_a/b/a_fold"/>
</dbReference>
<dbReference type="NCBIfam" id="TIGR00364">
    <property type="entry name" value="7-cyano-7-deazaguanine synthase QueC"/>
    <property type="match status" value="1"/>
</dbReference>
<dbReference type="PANTHER" id="PTHR42914">
    <property type="entry name" value="7-CYANO-7-DEAZAGUANINE SYNTHASE"/>
    <property type="match status" value="1"/>
</dbReference>
<dbReference type="PANTHER" id="PTHR42914:SF1">
    <property type="entry name" value="7-CYANO-7-DEAZAGUANINE SYNTHASE"/>
    <property type="match status" value="1"/>
</dbReference>
<dbReference type="Pfam" id="PF06508">
    <property type="entry name" value="QueC"/>
    <property type="match status" value="1"/>
</dbReference>
<dbReference type="PIRSF" id="PIRSF006293">
    <property type="entry name" value="ExsB"/>
    <property type="match status" value="1"/>
</dbReference>
<dbReference type="SUPFAM" id="SSF52402">
    <property type="entry name" value="Adenine nucleotide alpha hydrolases-like"/>
    <property type="match status" value="1"/>
</dbReference>
<organism>
    <name type="scientific">Picrophilus torridus (strain ATCC 700027 / DSM 9790 / JCM 10055 / NBRC 100828 / KAW 2/3)</name>
    <dbReference type="NCBI Taxonomy" id="1122961"/>
    <lineage>
        <taxon>Archaea</taxon>
        <taxon>Methanobacteriati</taxon>
        <taxon>Thermoplasmatota</taxon>
        <taxon>Thermoplasmata</taxon>
        <taxon>Thermoplasmatales</taxon>
        <taxon>Picrophilaceae</taxon>
        <taxon>Picrophilus</taxon>
    </lineage>
</organism>
<feature type="chain" id="PRO_0000246983" description="7-cyano-7-deazaguanine synthase">
    <location>
        <begin position="1"/>
        <end position="239"/>
    </location>
</feature>
<feature type="binding site" evidence="1">
    <location>
        <begin position="8"/>
        <end position="18"/>
    </location>
    <ligand>
        <name>ATP</name>
        <dbReference type="ChEBI" id="CHEBI:30616"/>
    </ligand>
</feature>
<feature type="binding site" evidence="1">
    <location>
        <position position="188"/>
    </location>
    <ligand>
        <name>Zn(2+)</name>
        <dbReference type="ChEBI" id="CHEBI:29105"/>
    </ligand>
</feature>
<feature type="binding site" evidence="1">
    <location>
        <position position="196"/>
    </location>
    <ligand>
        <name>Zn(2+)</name>
        <dbReference type="ChEBI" id="CHEBI:29105"/>
    </ligand>
</feature>
<feature type="binding site" evidence="1">
    <location>
        <position position="199"/>
    </location>
    <ligand>
        <name>Zn(2+)</name>
        <dbReference type="ChEBI" id="CHEBI:29105"/>
    </ligand>
</feature>
<feature type="binding site" evidence="1">
    <location>
        <position position="202"/>
    </location>
    <ligand>
        <name>Zn(2+)</name>
        <dbReference type="ChEBI" id="CHEBI:29105"/>
    </ligand>
</feature>